<accession>Q12980</accession>
<accession>D3DU40</accession>
<accession>Q1W6H0</accession>
<accession>Q4TT56</accession>
<accession>Q92469</accession>
<keyword id="KW-0002">3D-structure</keyword>
<keyword id="KW-0225">Disease variant</keyword>
<keyword id="KW-0887">Epilepsy</keyword>
<keyword id="KW-0343">GTPase activation</keyword>
<keyword id="KW-0458">Lysosome</keyword>
<keyword id="KW-0472">Membrane</keyword>
<keyword id="KW-0597">Phosphoprotein</keyword>
<keyword id="KW-1267">Proteomics identification</keyword>
<keyword id="KW-1185">Reference proteome</keyword>
<proteinExistence type="evidence at protein level"/>
<organism>
    <name type="scientific">Homo sapiens</name>
    <name type="common">Human</name>
    <dbReference type="NCBI Taxonomy" id="9606"/>
    <lineage>
        <taxon>Eukaryota</taxon>
        <taxon>Metazoa</taxon>
        <taxon>Chordata</taxon>
        <taxon>Craniata</taxon>
        <taxon>Vertebrata</taxon>
        <taxon>Euteleostomi</taxon>
        <taxon>Mammalia</taxon>
        <taxon>Eutheria</taxon>
        <taxon>Euarchontoglires</taxon>
        <taxon>Primates</taxon>
        <taxon>Haplorrhini</taxon>
        <taxon>Catarrhini</taxon>
        <taxon>Hominidae</taxon>
        <taxon>Homo</taxon>
    </lineage>
</organism>
<evidence type="ECO:0000256" key="1">
    <source>
        <dbReference type="SAM" id="MobiDB-lite"/>
    </source>
</evidence>
<evidence type="ECO:0000269" key="2">
    <source>
    </source>
</evidence>
<evidence type="ECO:0000269" key="3">
    <source>
    </source>
</evidence>
<evidence type="ECO:0000269" key="4">
    <source>
    </source>
</evidence>
<evidence type="ECO:0000269" key="5">
    <source>
    </source>
</evidence>
<evidence type="ECO:0000269" key="6">
    <source>
    </source>
</evidence>
<evidence type="ECO:0000269" key="7">
    <source>
    </source>
</evidence>
<evidence type="ECO:0000269" key="8">
    <source>
    </source>
</evidence>
<evidence type="ECO:0000269" key="9">
    <source>
    </source>
</evidence>
<evidence type="ECO:0000303" key="10">
    <source>
    </source>
</evidence>
<evidence type="ECO:0000303" key="11">
    <source>
    </source>
</evidence>
<evidence type="ECO:0000305" key="12"/>
<evidence type="ECO:0000305" key="13">
    <source>
    </source>
</evidence>
<evidence type="ECO:0000312" key="14">
    <source>
        <dbReference type="HGNC" id="HGNC:14124"/>
    </source>
</evidence>
<evidence type="ECO:0007744" key="15">
    <source>
        <dbReference type="PDB" id="6CES"/>
    </source>
</evidence>
<evidence type="ECO:0007744" key="16">
    <source>
        <dbReference type="PDB" id="6CET"/>
    </source>
</evidence>
<evidence type="ECO:0007744" key="17">
    <source>
        <dbReference type="PDB" id="7T3A"/>
    </source>
</evidence>
<evidence type="ECO:0007744" key="18">
    <source>
        <dbReference type="PDB" id="7T3B"/>
    </source>
</evidence>
<evidence type="ECO:0007744" key="19">
    <source>
        <dbReference type="PDB" id="7T3C"/>
    </source>
</evidence>
<evidence type="ECO:0007744" key="20">
    <source>
    </source>
</evidence>
<evidence type="ECO:0007829" key="21">
    <source>
        <dbReference type="PDB" id="8FW5"/>
    </source>
</evidence>
<dbReference type="EMBL" id="X90857">
    <property type="protein sequence ID" value="CAA62368.1"/>
    <property type="molecule type" value="mRNA"/>
</dbReference>
<dbReference type="EMBL" id="DQ431198">
    <property type="protein sequence ID" value="ABD95907.1"/>
    <property type="molecule type" value="Genomic_DNA"/>
</dbReference>
<dbReference type="EMBL" id="Z69666">
    <property type="protein sequence ID" value="CAI94885.1"/>
    <property type="molecule type" value="Genomic_DNA"/>
</dbReference>
<dbReference type="EMBL" id="Z69720">
    <property type="protein sequence ID" value="CAI94885.1"/>
    <property type="status" value="JOINED"/>
    <property type="molecule type" value="Genomic_DNA"/>
</dbReference>
<dbReference type="EMBL" id="Z84722">
    <property type="protein sequence ID" value="CAI94885.1"/>
    <property type="status" value="JOINED"/>
    <property type="molecule type" value="Genomic_DNA"/>
</dbReference>
<dbReference type="EMBL" id="Z69720">
    <property type="protein sequence ID" value="CAI95611.1"/>
    <property type="molecule type" value="Genomic_DNA"/>
</dbReference>
<dbReference type="EMBL" id="Z69666">
    <property type="protein sequence ID" value="CAI95611.1"/>
    <property type="status" value="JOINED"/>
    <property type="molecule type" value="Genomic_DNA"/>
</dbReference>
<dbReference type="EMBL" id="Z84722">
    <property type="protein sequence ID" value="CAI95611.1"/>
    <property type="status" value="JOINED"/>
    <property type="molecule type" value="Genomic_DNA"/>
</dbReference>
<dbReference type="EMBL" id="CH471112">
    <property type="protein sequence ID" value="EAW85865.1"/>
    <property type="molecule type" value="Genomic_DNA"/>
</dbReference>
<dbReference type="EMBL" id="CH471112">
    <property type="protein sequence ID" value="EAW85867.1"/>
    <property type="molecule type" value="Genomic_DNA"/>
</dbReference>
<dbReference type="CCDS" id="CCDS73795.1"/>
<dbReference type="RefSeq" id="NP_001070818.1">
    <property type="nucleotide sequence ID" value="NM_001077350.3"/>
</dbReference>
<dbReference type="PDB" id="6CES">
    <property type="method" value="EM"/>
    <property type="resolution" value="4.00 A"/>
    <property type="chains" value="M=1-569"/>
</dbReference>
<dbReference type="PDB" id="6CET">
    <property type="method" value="EM"/>
    <property type="resolution" value="4.40 A"/>
    <property type="chains" value="M=1-569"/>
</dbReference>
<dbReference type="PDB" id="7T3A">
    <property type="method" value="EM"/>
    <property type="resolution" value="4.00 A"/>
    <property type="chains" value="C=1-569"/>
</dbReference>
<dbReference type="PDB" id="7T3B">
    <property type="method" value="EM"/>
    <property type="resolution" value="3.90 A"/>
    <property type="chains" value="C=1-569"/>
</dbReference>
<dbReference type="PDB" id="7T3C">
    <property type="method" value="EM"/>
    <property type="resolution" value="4.00 A"/>
    <property type="chains" value="C=1-569"/>
</dbReference>
<dbReference type="PDB" id="8FW5">
    <property type="method" value="EM"/>
    <property type="resolution" value="3.08 A"/>
    <property type="chains" value="C=1-569"/>
</dbReference>
<dbReference type="PDBsum" id="6CES"/>
<dbReference type="PDBsum" id="6CET"/>
<dbReference type="PDBsum" id="7T3A"/>
<dbReference type="PDBsum" id="7T3B"/>
<dbReference type="PDBsum" id="7T3C"/>
<dbReference type="PDBsum" id="8FW5"/>
<dbReference type="EMDB" id="EMD-25652"/>
<dbReference type="EMDB" id="EMD-25653"/>
<dbReference type="EMDB" id="EMD-25654"/>
<dbReference type="EMDB" id="EMD-29497"/>
<dbReference type="EMDB" id="EMD-7464"/>
<dbReference type="EMDB" id="EMD-7465"/>
<dbReference type="SMR" id="Q12980"/>
<dbReference type="BioGRID" id="113796">
    <property type="interactions" value="118"/>
</dbReference>
<dbReference type="ComplexPortal" id="CPX-6226">
    <property type="entry name" value="GATOR1 complex"/>
</dbReference>
<dbReference type="CORUM" id="Q12980"/>
<dbReference type="DIP" id="DIP-62051N"/>
<dbReference type="FunCoup" id="Q12980">
    <property type="interactions" value="852"/>
</dbReference>
<dbReference type="IntAct" id="Q12980">
    <property type="interactions" value="60"/>
</dbReference>
<dbReference type="STRING" id="9606.ENSP00000483814"/>
<dbReference type="GlyConnect" id="2060">
    <property type="glycosylation" value="1 N-Linked glycan (1 site)"/>
</dbReference>
<dbReference type="GlyCosmos" id="Q12980">
    <property type="glycosylation" value="1 site, 2 glycans"/>
</dbReference>
<dbReference type="GlyGen" id="Q12980">
    <property type="glycosylation" value="2 sites, 2 N-linked glycans (1 site), 1 O-linked glycan (1 site)"/>
</dbReference>
<dbReference type="iPTMnet" id="Q12980"/>
<dbReference type="PhosphoSitePlus" id="Q12980"/>
<dbReference type="BioMuta" id="NPRL3"/>
<dbReference type="DMDM" id="18202492"/>
<dbReference type="jPOST" id="Q12980"/>
<dbReference type="MassIVE" id="Q12980"/>
<dbReference type="PaxDb" id="9606-ENSP00000483814"/>
<dbReference type="PeptideAtlas" id="Q12980"/>
<dbReference type="ProteomicsDB" id="59074"/>
<dbReference type="Pumba" id="Q12980"/>
<dbReference type="Antibodypedia" id="1565">
    <property type="antibodies" value="77 antibodies from 26 providers"/>
</dbReference>
<dbReference type="DNASU" id="8131"/>
<dbReference type="Ensembl" id="ENST00000611875.5">
    <property type="protein sequence ID" value="ENSP00000478273.1"/>
    <property type="gene ID" value="ENSG00000103148.17"/>
</dbReference>
<dbReference type="GeneID" id="8131"/>
<dbReference type="KEGG" id="hsa:8131"/>
<dbReference type="MANE-Select" id="ENST00000611875.5">
    <property type="protein sequence ID" value="ENSP00000478273.1"/>
    <property type="RefSeq nucleotide sequence ID" value="NM_001077350.3"/>
    <property type="RefSeq protein sequence ID" value="NP_001070818.1"/>
</dbReference>
<dbReference type="UCSC" id="uc032dmr.2">
    <property type="organism name" value="human"/>
</dbReference>
<dbReference type="AGR" id="HGNC:14124"/>
<dbReference type="CTD" id="8131"/>
<dbReference type="DisGeNET" id="8131"/>
<dbReference type="GeneCards" id="NPRL3"/>
<dbReference type="GeneReviews" id="NPRL3"/>
<dbReference type="HGNC" id="HGNC:14124">
    <property type="gene designation" value="NPRL3"/>
</dbReference>
<dbReference type="HPA" id="ENSG00000103148">
    <property type="expression patterns" value="Low tissue specificity"/>
</dbReference>
<dbReference type="MalaCards" id="NPRL3"/>
<dbReference type="MIM" id="600928">
    <property type="type" value="gene"/>
</dbReference>
<dbReference type="MIM" id="617118">
    <property type="type" value="phenotype"/>
</dbReference>
<dbReference type="neXtProt" id="NX_Q12980"/>
<dbReference type="OpenTargets" id="ENSG00000103148"/>
<dbReference type="Orphanet" id="98820">
    <property type="disease" value="Familial focal epilepsy with variable foci"/>
</dbReference>
<dbReference type="PharmGKB" id="PA25550"/>
<dbReference type="VEuPathDB" id="HostDB:ENSG00000103148"/>
<dbReference type="eggNOG" id="KOG3830">
    <property type="taxonomic scope" value="Eukaryota"/>
</dbReference>
<dbReference type="GeneTree" id="ENSGT00390000015916"/>
<dbReference type="HOGENOM" id="CLU_014030_1_0_1"/>
<dbReference type="InParanoid" id="Q12980"/>
<dbReference type="OMA" id="CNLAFRY"/>
<dbReference type="OrthoDB" id="18648at2759"/>
<dbReference type="PAN-GO" id="Q12980">
    <property type="GO annotations" value="5 GO annotations based on evolutionary models"/>
</dbReference>
<dbReference type="PhylomeDB" id="Q12980"/>
<dbReference type="TreeFam" id="TF105965"/>
<dbReference type="PathwayCommons" id="Q12980"/>
<dbReference type="Reactome" id="R-HSA-9639288">
    <property type="pathway name" value="Amino acids regulate mTORC1"/>
</dbReference>
<dbReference type="SignaLink" id="Q12980"/>
<dbReference type="SIGNOR" id="Q12980"/>
<dbReference type="BioGRID-ORCS" id="8131">
    <property type="hits" value="42 hits in 325 CRISPR screens"/>
</dbReference>
<dbReference type="ChiTaRS" id="NPRL3">
    <property type="organism name" value="human"/>
</dbReference>
<dbReference type="GenomeRNAi" id="8131"/>
<dbReference type="Pharos" id="Q12980">
    <property type="development level" value="Tbio"/>
</dbReference>
<dbReference type="PRO" id="PR:Q12980"/>
<dbReference type="Proteomes" id="UP000005640">
    <property type="component" value="Chromosome 16"/>
</dbReference>
<dbReference type="RNAct" id="Q12980">
    <property type="molecule type" value="protein"/>
</dbReference>
<dbReference type="Bgee" id="ENSG00000103148">
    <property type="expression patterns" value="Expressed in blood and 195 other cell types or tissues"/>
</dbReference>
<dbReference type="ExpressionAtlas" id="Q12980">
    <property type="expression patterns" value="baseline and differential"/>
</dbReference>
<dbReference type="GO" id="GO:1990130">
    <property type="term" value="C:GATOR1 complex"/>
    <property type="evidence" value="ECO:0000314"/>
    <property type="project" value="UniProtKB"/>
</dbReference>
<dbReference type="GO" id="GO:0005765">
    <property type="term" value="C:lysosomal membrane"/>
    <property type="evidence" value="ECO:0000314"/>
    <property type="project" value="UniProtKB"/>
</dbReference>
<dbReference type="GO" id="GO:0005096">
    <property type="term" value="F:GTPase activator activity"/>
    <property type="evidence" value="ECO:0007669"/>
    <property type="project" value="UniProtKB-KW"/>
</dbReference>
<dbReference type="GO" id="GO:0035909">
    <property type="term" value="P:aorta morphogenesis"/>
    <property type="evidence" value="ECO:0007669"/>
    <property type="project" value="Ensembl"/>
</dbReference>
<dbReference type="GO" id="GO:0048738">
    <property type="term" value="P:cardiac muscle tissue development"/>
    <property type="evidence" value="ECO:0007669"/>
    <property type="project" value="Ensembl"/>
</dbReference>
<dbReference type="GO" id="GO:0034198">
    <property type="term" value="P:cellular response to amino acid starvation"/>
    <property type="evidence" value="ECO:0000314"/>
    <property type="project" value="UniProtKB"/>
</dbReference>
<dbReference type="GO" id="GO:1904262">
    <property type="term" value="P:negative regulation of TORC1 signaling"/>
    <property type="evidence" value="ECO:0000314"/>
    <property type="project" value="UniProtKB"/>
</dbReference>
<dbReference type="GO" id="GO:0010508">
    <property type="term" value="P:positive regulation of autophagy"/>
    <property type="evidence" value="ECO:0000318"/>
    <property type="project" value="GO_Central"/>
</dbReference>
<dbReference type="GO" id="GO:0060021">
    <property type="term" value="P:roof of mouth development"/>
    <property type="evidence" value="ECO:0007669"/>
    <property type="project" value="Ensembl"/>
</dbReference>
<dbReference type="GO" id="GO:0003281">
    <property type="term" value="P:ventricular septum development"/>
    <property type="evidence" value="ECO:0007669"/>
    <property type="project" value="Ensembl"/>
</dbReference>
<dbReference type="InterPro" id="IPR056603">
    <property type="entry name" value="HTH_NPRL3"/>
</dbReference>
<dbReference type="InterPro" id="IPR005365">
    <property type="entry name" value="Npr3"/>
</dbReference>
<dbReference type="PANTHER" id="PTHR13153">
    <property type="entry name" value="CGTHBA PROTEIN -14 GENE PROTEIN"/>
    <property type="match status" value="1"/>
</dbReference>
<dbReference type="PANTHER" id="PTHR13153:SF5">
    <property type="entry name" value="GATOR COMPLEX PROTEIN NPRL3"/>
    <property type="match status" value="1"/>
</dbReference>
<dbReference type="Pfam" id="PF24064">
    <property type="entry name" value="HTH_NPRL3"/>
    <property type="match status" value="1"/>
</dbReference>
<dbReference type="Pfam" id="PF03666">
    <property type="entry name" value="NPR3"/>
    <property type="match status" value="1"/>
</dbReference>
<gene>
    <name evidence="10 14" type="primary">NPRL3</name>
    <name evidence="14" type="synonym">C16orf35</name>
    <name type="synonym">CGTHBA</name>
    <name evidence="13" type="synonym">MARE</name>
</gene>
<comment type="function">
    <text evidence="2 7 8">As a component of the GATOR1 complex functions as an inhibitor of the amino acid-sensing branch of the mTORC1 pathway (PubMed:23723238, PubMed:29590090, PubMed:35338845). In response to amino acid depletion, the GATOR1 complex has GTPase activating protein (GAP) activity and strongly increases GTP hydrolysis by RagA/RRAGA (or RagB/RRAGB) within heterodimeric Rag complexes, thereby turning them into their inactive GDP-bound form, releasing mTORC1 from lysosomal surface and inhibiting mTORC1 signaling (PubMed:23723238, PubMed:29590090, PubMed:35338845). In the presence of abundant amino acids, the GATOR1 complex is negatively regulated by GATOR2, the other GATOR subcomplex, in this amino acid-sensing branch of the TORC1 pathway (PubMed:23723238).</text>
</comment>
<comment type="subunit">
    <text evidence="2 7 8 9">Within the GATOR complex, component of the GATOR1 subcomplex, made of DEPDC5, NPRL2 and NPRL3 (PubMed:23723238, PubMed:29590090, PubMed:35338845). GATOR1 mediates the strong interaction of the GATOR complex with small GTPases Rag (RagA/RRAGA, RagB/RRAGB, RagC/RRAGC and/or RagD/RRAGD) heterodimers (PubMed:23723238). GATOR1 interacts with GPR155/LYCHOS; interaction takes place in presence of cholesterol and prevents interaction between GATOR1 and KICSTOR (PubMed:36007018).</text>
</comment>
<comment type="interaction">
    <interactant intactId="EBI-2650314">
        <id>Q12980</id>
    </interactant>
    <interactant intactId="EBI-1043552">
        <id>Q8WTW4</id>
        <label>NPRL2</label>
    </interactant>
    <organismsDiffer>false</organismsDiffer>
    <experiments>9</experiments>
</comment>
<comment type="interaction">
    <interactant intactId="EBI-2650314">
        <id>Q12980</id>
    </interactant>
    <interactant intactId="EBI-10749411">
        <id>Q5T011</id>
        <label>SZT2</label>
    </interactant>
    <organismsDiffer>false</organismsDiffer>
    <experiments>5</experiments>
</comment>
<comment type="subcellular location">
    <subcellularLocation>
        <location evidence="6">Lysosome membrane</location>
    </subcellularLocation>
    <text evidence="6">Localization to lysosomes is mediated by the KICSTOR complex and is amino acid-independent.</text>
</comment>
<comment type="tissue specificity">
    <text evidence="4 5">Widely expressed. Expressed in the frontal lobe cortex as well as in the temporal, parietal, and occipital lobes (PubMed:26505888, PubMed:27173016).</text>
</comment>
<comment type="disease">
    <text evidence="2">Inactivating mutations and truncating deletions in the genes encoding GATOR1 proteins are detected in glioblastoma and ovarian tumors and are associated with loss of heterozygosity events. Inactivation of GATOR1 proteins promotes constitutive localization of mTORC1 to the lysosomal membrane and blocks mTORC1 inactivation following amino acid withdrawal (PubMed:23723238).</text>
</comment>
<comment type="disease" evidence="3 4 5">
    <disease id="DI-04831">
        <name>Epilepsy, familial focal, with variable foci 3</name>
        <acronym>FFEVF3</acronym>
        <description>An autosomal dominant form of epilepsy characterized by focal seizures arising from different cortical regions, including the temporal, frontal, parietal, and occipital lobes. Seizure types commonly include temporal lobe epilepsy, frontal lobe epilepsy, and nocturnal frontal lobe epilepsy. Some patients may have intellectual disability or autism spectrum disorders. Seizure onset usually occurs in the first or second decades, although later onset has been reported, and there is phenotypic variability within families. A subset of patients have structural brain abnormalities. Penetrance of the disorder is incomplete.</description>
        <dbReference type="MIM" id="617118"/>
    </disease>
    <text>The disease is caused by variants affecting the gene represented in this entry.</text>
</comment>
<comment type="similarity">
    <text evidence="12">Belongs to the NPR3 family.</text>
</comment>
<comment type="caution">
    <text evidence="12">Ser-489 is missing in the human genome assembly but is present in all available mRNAs and ESTs.</text>
</comment>
<name>NPRL3_HUMAN</name>
<protein>
    <recommendedName>
        <fullName evidence="12">GATOR1 complex protein NPRL3</fullName>
    </recommendedName>
    <alternativeName>
        <fullName evidence="11">-14 gene protein</fullName>
    </alternativeName>
    <alternativeName>
        <fullName evidence="11">Alpha-globin regulatory element-containing gene protein</fullName>
    </alternativeName>
    <alternativeName>
        <fullName evidence="14">Nitrogen permease regulator 3-like protein</fullName>
    </alternativeName>
    <alternativeName>
        <fullName>Protein CGTHBA</fullName>
    </alternativeName>
</protein>
<reference key="1">
    <citation type="journal article" date="1995" name="Genomics">
        <title>Conservation of position and sequence of a novel, widely expressed gene containing the major human alpha-globin regulatory element.</title>
        <authorList>
            <person name="Vyas P."/>
            <person name="Vickers M.A."/>
            <person name="Picketts D.J."/>
            <person name="Higgs D."/>
        </authorList>
    </citation>
    <scope>NUCLEOTIDE SEQUENCE [MRNA]</scope>
</reference>
<reference key="2">
    <citation type="journal article" date="2006" name="Science">
        <title>A regulatory SNP causes a human genetic disease by creating a new transcriptional promoter.</title>
        <authorList>
            <person name="De Gobbi M."/>
            <person name="Viprakasit V."/>
            <person name="Hughes J.R."/>
            <person name="Fisher C."/>
            <person name="Buckle V.J."/>
            <person name="Ayyub H."/>
            <person name="Gibbons R.J."/>
            <person name="Vernimmen D."/>
            <person name="Yoshinaga Y."/>
            <person name="de Jong P."/>
            <person name="Cheng J.-F."/>
            <person name="Rubin E.M."/>
            <person name="Wood W.G."/>
            <person name="Bowden D."/>
            <person name="Higgs D.R."/>
        </authorList>
    </citation>
    <scope>NUCLEOTIDE SEQUENCE [GENOMIC DNA]</scope>
</reference>
<reference key="3">
    <citation type="journal article" date="2004" name="Nature">
        <title>The sequence and analysis of duplication-rich human chromosome 16.</title>
        <authorList>
            <person name="Martin J."/>
            <person name="Han C."/>
            <person name="Gordon L.A."/>
            <person name="Terry A."/>
            <person name="Prabhakar S."/>
            <person name="She X."/>
            <person name="Xie G."/>
            <person name="Hellsten U."/>
            <person name="Chan Y.M."/>
            <person name="Altherr M."/>
            <person name="Couronne O."/>
            <person name="Aerts A."/>
            <person name="Bajorek E."/>
            <person name="Black S."/>
            <person name="Blumer H."/>
            <person name="Branscomb E."/>
            <person name="Brown N.C."/>
            <person name="Bruno W.J."/>
            <person name="Buckingham J.M."/>
            <person name="Callen D.F."/>
            <person name="Campbell C.S."/>
            <person name="Campbell M.L."/>
            <person name="Campbell E.W."/>
            <person name="Caoile C."/>
            <person name="Challacombe J.F."/>
            <person name="Chasteen L.A."/>
            <person name="Chertkov O."/>
            <person name="Chi H.C."/>
            <person name="Christensen M."/>
            <person name="Clark L.M."/>
            <person name="Cohn J.D."/>
            <person name="Denys M."/>
            <person name="Detter J.C."/>
            <person name="Dickson M."/>
            <person name="Dimitrijevic-Bussod M."/>
            <person name="Escobar J."/>
            <person name="Fawcett J.J."/>
            <person name="Flowers D."/>
            <person name="Fotopulos D."/>
            <person name="Glavina T."/>
            <person name="Gomez M."/>
            <person name="Gonzales E."/>
            <person name="Goodstein D."/>
            <person name="Goodwin L.A."/>
            <person name="Grady D.L."/>
            <person name="Grigoriev I."/>
            <person name="Groza M."/>
            <person name="Hammon N."/>
            <person name="Hawkins T."/>
            <person name="Haydu L."/>
            <person name="Hildebrand C.E."/>
            <person name="Huang W."/>
            <person name="Israni S."/>
            <person name="Jett J."/>
            <person name="Jewett P.B."/>
            <person name="Kadner K."/>
            <person name="Kimball H."/>
            <person name="Kobayashi A."/>
            <person name="Krawczyk M.-C."/>
            <person name="Leyba T."/>
            <person name="Longmire J.L."/>
            <person name="Lopez F."/>
            <person name="Lou Y."/>
            <person name="Lowry S."/>
            <person name="Ludeman T."/>
            <person name="Manohar C.F."/>
            <person name="Mark G.A."/>
            <person name="McMurray K.L."/>
            <person name="Meincke L.J."/>
            <person name="Morgan J."/>
            <person name="Moyzis R.K."/>
            <person name="Mundt M.O."/>
            <person name="Munk A.C."/>
            <person name="Nandkeshwar R.D."/>
            <person name="Pitluck S."/>
            <person name="Pollard M."/>
            <person name="Predki P."/>
            <person name="Parson-Quintana B."/>
            <person name="Ramirez L."/>
            <person name="Rash S."/>
            <person name="Retterer J."/>
            <person name="Ricke D.O."/>
            <person name="Robinson D.L."/>
            <person name="Rodriguez A."/>
            <person name="Salamov A."/>
            <person name="Saunders E.H."/>
            <person name="Scott D."/>
            <person name="Shough T."/>
            <person name="Stallings R.L."/>
            <person name="Stalvey M."/>
            <person name="Sutherland R.D."/>
            <person name="Tapia R."/>
            <person name="Tesmer J.G."/>
            <person name="Thayer N."/>
            <person name="Thompson L.S."/>
            <person name="Tice H."/>
            <person name="Torney D.C."/>
            <person name="Tran-Gyamfi M."/>
            <person name="Tsai M."/>
            <person name="Ulanovsky L.E."/>
            <person name="Ustaszewska A."/>
            <person name="Vo N."/>
            <person name="White P.S."/>
            <person name="Williams A.L."/>
            <person name="Wills P.L."/>
            <person name="Wu J.-R."/>
            <person name="Wu K."/>
            <person name="Yang J."/>
            <person name="DeJong P."/>
            <person name="Bruce D."/>
            <person name="Doggett N.A."/>
            <person name="Deaven L."/>
            <person name="Schmutz J."/>
            <person name="Grimwood J."/>
            <person name="Richardson P."/>
            <person name="Rokhsar D.S."/>
            <person name="Eichler E.E."/>
            <person name="Gilna P."/>
            <person name="Lucas S.M."/>
            <person name="Myers R.M."/>
            <person name="Rubin E.M."/>
            <person name="Pennacchio L.A."/>
        </authorList>
    </citation>
    <scope>NUCLEOTIDE SEQUENCE [LARGE SCALE GENOMIC DNA]</scope>
</reference>
<reference key="4">
    <citation type="submission" date="2005-09" db="EMBL/GenBank/DDBJ databases">
        <authorList>
            <person name="Mural R.J."/>
            <person name="Istrail S."/>
            <person name="Sutton G.G."/>
            <person name="Florea L."/>
            <person name="Halpern A.L."/>
            <person name="Mobarry C.M."/>
            <person name="Lippert R."/>
            <person name="Walenz B."/>
            <person name="Shatkay H."/>
            <person name="Dew I."/>
            <person name="Miller J.R."/>
            <person name="Flanigan M.J."/>
            <person name="Edwards N.J."/>
            <person name="Bolanos R."/>
            <person name="Fasulo D."/>
            <person name="Halldorsson B.V."/>
            <person name="Hannenhalli S."/>
            <person name="Turner R."/>
            <person name="Yooseph S."/>
            <person name="Lu F."/>
            <person name="Nusskern D.R."/>
            <person name="Shue B.C."/>
            <person name="Zheng X.H."/>
            <person name="Zhong F."/>
            <person name="Delcher A.L."/>
            <person name="Huson D.H."/>
            <person name="Kravitz S.A."/>
            <person name="Mouchard L."/>
            <person name="Reinert K."/>
            <person name="Remington K.A."/>
            <person name="Clark A.G."/>
            <person name="Waterman M.S."/>
            <person name="Eichler E.E."/>
            <person name="Adams M.D."/>
            <person name="Hunkapiller M.W."/>
            <person name="Myers E.W."/>
            <person name="Venter J.C."/>
        </authorList>
    </citation>
    <scope>NUCLEOTIDE SEQUENCE [LARGE SCALE GENOMIC DNA]</scope>
</reference>
<reference key="5">
    <citation type="journal article" date="2009" name="PLoS Genet.">
        <title>A genome-wide screen for regulators of TORC1 in response to amino acid starvation reveals a conserved Npr2/3 complex.</title>
        <authorList>
            <person name="Neklesa T.K."/>
            <person name="Davis R.W."/>
        </authorList>
    </citation>
    <scope>INTERACTION WITH NPRL2</scope>
</reference>
<reference key="6">
    <citation type="journal article" date="2013" name="Science">
        <title>A Tumor suppressor complex with GAP activity for the Rag GTPases that signal amino acid sufficiency to mTORC1.</title>
        <authorList>
            <person name="Bar-Peled L."/>
            <person name="Chantranupong L."/>
            <person name="Cherniack A.D."/>
            <person name="Chen W.W."/>
            <person name="Ottina K.A."/>
            <person name="Grabiner B.C."/>
            <person name="Spear E.D."/>
            <person name="Carter S.L."/>
            <person name="Meyerson M."/>
            <person name="Sabatini D.M."/>
        </authorList>
    </citation>
    <scope>FUNCTION</scope>
    <scope>IDENTIFICATION IN GATOR COMPLEX</scope>
    <scope>INTERACTION WITH RRAG PROTEINS</scope>
</reference>
<reference key="7">
    <citation type="journal article" date="2014" name="J. Proteomics">
        <title>An enzyme assisted RP-RPLC approach for in-depth analysis of human liver phosphoproteome.</title>
        <authorList>
            <person name="Bian Y."/>
            <person name="Song C."/>
            <person name="Cheng K."/>
            <person name="Dong M."/>
            <person name="Wang F."/>
            <person name="Huang J."/>
            <person name="Sun D."/>
            <person name="Wang L."/>
            <person name="Ye M."/>
            <person name="Zou H."/>
        </authorList>
    </citation>
    <scope>PHOSPHORYLATION [LARGE SCALE ANALYSIS] AT SER-476</scope>
    <scope>IDENTIFICATION BY MASS SPECTROMETRY [LARGE SCALE ANALYSIS]</scope>
    <source>
        <tissue>Liver</tissue>
    </source>
</reference>
<reference key="8">
    <citation type="journal article" date="2017" name="Nature">
        <title>KICSTOR recruits GATOR1 to the lysosome and is necessary for nutrients to regulate mTORC1.</title>
        <authorList>
            <person name="Wolfson R.L."/>
            <person name="Chantranupong L."/>
            <person name="Wyant G.A."/>
            <person name="Gu X."/>
            <person name="Orozco J.M."/>
            <person name="Shen K."/>
            <person name="Condon K.J."/>
            <person name="Petri S."/>
            <person name="Kedir J."/>
            <person name="Scaria S.M."/>
            <person name="Abu-Remaileh M."/>
            <person name="Frankel W.N."/>
            <person name="Sabatini D.M."/>
        </authorList>
    </citation>
    <scope>SUBCELLULAR LOCATION</scope>
</reference>
<reference key="9">
    <citation type="journal article" date="2022" name="Science">
        <title>Lysosomal GPCR-like protein LYCHOS signals cholesterol sufficiency to mTORC1.</title>
        <authorList>
            <person name="Shin H.R."/>
            <person name="Citron Y.R."/>
            <person name="Wang L."/>
            <person name="Tribouillard L."/>
            <person name="Goul C.S."/>
            <person name="Stipp R."/>
            <person name="Sugasawa Y."/>
            <person name="Jain A."/>
            <person name="Samson N."/>
            <person name="Lim C.Y."/>
            <person name="Davis O.B."/>
            <person name="Castaneda-Carpio D."/>
            <person name="Qian M."/>
            <person name="Nomura D.K."/>
            <person name="Perera R.M."/>
            <person name="Park E."/>
            <person name="Covey D.F."/>
            <person name="Laplante M."/>
            <person name="Evers A.S."/>
            <person name="Zoncu R."/>
        </authorList>
    </citation>
    <scope>INTERACTION WITH GPR155</scope>
</reference>
<reference evidence="15 16" key="10">
    <citation type="journal article" date="2018" name="Nature">
        <title>Architecture of the human GATOR1 and GATOR1-Rag GTPases complexes.</title>
        <authorList>
            <person name="Shen K."/>
            <person name="Huang R.K."/>
            <person name="Brignole E.J."/>
            <person name="Condon K.J."/>
            <person name="Valenstein M.L."/>
            <person name="Chantranupong L."/>
            <person name="Bomaliyamu A."/>
            <person name="Choe A."/>
            <person name="Hong C."/>
            <person name="Yu Z."/>
            <person name="Sabatini D.M."/>
        </authorList>
    </citation>
    <scope>STRUCTURE BY ELECTRON MICROSCOPY (4.00 ANGSTROMS) IN COMPLEX WITH RRAGA; RRAGC; DEPDC5 AND NPRL2</scope>
    <scope>FUNCTION</scope>
    <scope>IDENTIFICATION IN GATOR1 COMPLEX</scope>
</reference>
<reference evidence="17 18 19" key="11">
    <citation type="journal article" date="2022" name="Mol. Cell">
        <title>Cryo-EM structures of the human GATOR1-Rag-Ragulator complex reveal a spatial-constraint regulated GAP mechanism.</title>
        <authorList>
            <person name="Egri S.B."/>
            <person name="Ouch C."/>
            <person name="Chou H.T."/>
            <person name="Yu Z."/>
            <person name="Song K."/>
            <person name="Xu C."/>
            <person name="Shen K."/>
        </authorList>
    </citation>
    <scope>STRUCTURE BY ELECTRON MICROSCOPY (3.90 ANGSTROMS) IN COMPLEX WITH RRAGA; RRAGC; DEPDC5; NPRL2; LAMTOR1; LAMTOR2; LAMTOR3; LAMTOR4 AND LAMTOR5</scope>
    <scope>FUNCTION</scope>
    <scope>IDENTIFICATION IN GATOR1 COMPLEX</scope>
</reference>
<reference key="12">
    <citation type="journal article" date="2016" name="Ann. Neurol.">
        <title>Mutations in the mammalian target of rapamycin pathway regulators NPRL2 and NPRL3 cause focal epilepsy.</title>
        <authorList>
            <consortium name="Epilepsy Electroclinical Study Group"/>
            <person name="Ricos M.G."/>
            <person name="Hodgson B.L."/>
            <person name="Pippucci T."/>
            <person name="Saidin A."/>
            <person name="Ong Y.S."/>
            <person name="Heron S.E."/>
            <person name="Licchetta L."/>
            <person name="Bisulli F."/>
            <person name="Bayly M.A."/>
            <person name="Hughes J."/>
            <person name="Baldassari S."/>
            <person name="Palombo F."/>
            <person name="Santucci M."/>
            <person name="Meletti S."/>
            <person name="Berkovic S.F."/>
            <person name="Rubboli G."/>
            <person name="Thomas P.Q."/>
            <person name="Scheffer I.E."/>
            <person name="Tinuper P."/>
            <person name="Geoghegan J."/>
            <person name="Schreiber A.W."/>
            <person name="Dibbens L.M."/>
        </authorList>
    </citation>
    <scope>INVOLVEMENT IN FFEVF3</scope>
    <scope>VARIANTS FFEVF3 GLN-92 AND LYS-249</scope>
    <scope>TISSUE SPECIFICITY</scope>
</reference>
<reference key="13">
    <citation type="journal article" date="2016" name="Ann. Neurol.">
        <title>Familial cortical dysplasia caused by mutation in the mammalian target of rapamycin regulator NPRL3.</title>
        <authorList>
            <person name="Sim J.C."/>
            <person name="Scerri T."/>
            <person name="Fanjul-Fernandez M."/>
            <person name="Riseley J.R."/>
            <person name="Gillies G."/>
            <person name="Pope K."/>
            <person name="van Roozendaal H."/>
            <person name="Heng J.I."/>
            <person name="Mandelstam S.A."/>
            <person name="McGillivray G."/>
            <person name="MacGregor D."/>
            <person name="Kannan L."/>
            <person name="Maixner W."/>
            <person name="Harvey A.S."/>
            <person name="Amor D.J."/>
            <person name="Delatycki M.B."/>
            <person name="Crino P.B."/>
            <person name="Bahlo M."/>
            <person name="Lockhart P.J."/>
            <person name="Leventer R.J."/>
        </authorList>
    </citation>
    <scope>INVOLVEMENT IN FFEVF3</scope>
    <scope>VARIANT FFEVF3 GLN-92</scope>
</reference>
<reference key="14">
    <citation type="journal article" date="2016" name="Epilepsia">
        <title>Involvement of GATOR complex genes in familial focal epilepsies and focal cortical dysplasia.</title>
        <authorList>
            <person name="Weckhuysen S."/>
            <person name="Marsan E."/>
            <person name="Lambrecq V."/>
            <person name="Marchal C."/>
            <person name="Morin-Brureau M."/>
            <person name="An-Gourfinkel I."/>
            <person name="Baulac M."/>
            <person name="Fohlen M."/>
            <person name="Kallay Zetchi C."/>
            <person name="Seeck M."/>
            <person name="de la Grange P."/>
            <person name="Dermaut B."/>
            <person name="Meurs A."/>
            <person name="Thomas P."/>
            <person name="Chassoux F."/>
            <person name="Leguern E."/>
            <person name="Picard F."/>
            <person name="Baulac S."/>
        </authorList>
    </citation>
    <scope>INVOLVEMENT IN FFEVF3</scope>
    <scope>VARIANT FFEVF3 LYS-249</scope>
    <scope>TISSUE SPECIFICITY</scope>
</reference>
<feature type="chain" id="PRO_0000220638" description="GATOR1 complex protein NPRL3">
    <location>
        <begin position="1"/>
        <end position="569"/>
    </location>
</feature>
<feature type="region of interest" description="Disordered" evidence="1">
    <location>
        <begin position="27"/>
        <end position="60"/>
    </location>
</feature>
<feature type="region of interest" description="Disordered" evidence="1">
    <location>
        <begin position="416"/>
        <end position="477"/>
    </location>
</feature>
<feature type="compositionally biased region" description="Polar residues" evidence="1">
    <location>
        <begin position="34"/>
        <end position="52"/>
    </location>
</feature>
<feature type="compositionally biased region" description="Polar residues" evidence="1">
    <location>
        <begin position="438"/>
        <end position="468"/>
    </location>
</feature>
<feature type="modified residue" description="Phosphoserine" evidence="20">
    <location>
        <position position="476"/>
    </location>
</feature>
<feature type="sequence variant" id="VAR_077126" description="In FFEVF3; uncertain significance; dbSNP:rs367729589." evidence="3 4">
    <original>R</original>
    <variation>Q</variation>
    <location>
        <position position="92"/>
    </location>
</feature>
<feature type="sequence variant" id="VAR_077127" description="In FFEVF3; uncertain significance; dbSNP:rs200041907." evidence="4 5">
    <original>E</original>
    <variation>K</variation>
    <location>
        <position position="249"/>
    </location>
</feature>
<feature type="sequence conflict" description="In Ref. 2; CAI94885/CAI95611." evidence="12" ref="2">
    <location>
        <position position="489"/>
    </location>
</feature>
<feature type="strand" evidence="21">
    <location>
        <begin position="8"/>
        <end position="16"/>
    </location>
</feature>
<feature type="strand" evidence="21">
    <location>
        <begin position="21"/>
        <end position="26"/>
    </location>
</feature>
<feature type="helix" evidence="21">
    <location>
        <begin position="66"/>
        <end position="73"/>
    </location>
</feature>
<feature type="helix" evidence="21">
    <location>
        <begin position="77"/>
        <end position="79"/>
    </location>
</feature>
<feature type="strand" evidence="21">
    <location>
        <begin position="84"/>
        <end position="95"/>
    </location>
</feature>
<feature type="strand" evidence="21">
    <location>
        <begin position="121"/>
        <end position="131"/>
    </location>
</feature>
<feature type="helix" evidence="21">
    <location>
        <begin position="136"/>
        <end position="160"/>
    </location>
</feature>
<feature type="helix" evidence="21">
    <location>
        <begin position="162"/>
        <end position="172"/>
    </location>
</feature>
<feature type="helix" evidence="21">
    <location>
        <begin position="194"/>
        <end position="197"/>
    </location>
</feature>
<feature type="helix" evidence="21">
    <location>
        <begin position="199"/>
        <end position="212"/>
    </location>
</feature>
<feature type="strand" evidence="21">
    <location>
        <begin position="260"/>
        <end position="265"/>
    </location>
</feature>
<feature type="helix" evidence="21">
    <location>
        <begin position="267"/>
        <end position="273"/>
    </location>
</feature>
<feature type="helix" evidence="21">
    <location>
        <begin position="280"/>
        <end position="288"/>
    </location>
</feature>
<feature type="strand" evidence="21">
    <location>
        <begin position="291"/>
        <end position="293"/>
    </location>
</feature>
<feature type="helix" evidence="21">
    <location>
        <begin position="295"/>
        <end position="301"/>
    </location>
</feature>
<feature type="helix" evidence="21">
    <location>
        <begin position="306"/>
        <end position="318"/>
    </location>
</feature>
<feature type="strand" evidence="21">
    <location>
        <begin position="321"/>
        <end position="325"/>
    </location>
</feature>
<feature type="strand" evidence="21">
    <location>
        <begin position="333"/>
        <end position="336"/>
    </location>
</feature>
<feature type="helix" evidence="21">
    <location>
        <begin position="347"/>
        <end position="355"/>
    </location>
</feature>
<feature type="helix" evidence="21">
    <location>
        <begin position="361"/>
        <end position="367"/>
    </location>
</feature>
<feature type="helix" evidence="21">
    <location>
        <begin position="374"/>
        <end position="377"/>
    </location>
</feature>
<feature type="strand" evidence="21">
    <location>
        <begin position="380"/>
        <end position="382"/>
    </location>
</feature>
<feature type="helix" evidence="21">
    <location>
        <begin position="384"/>
        <end position="399"/>
    </location>
</feature>
<feature type="strand" evidence="21">
    <location>
        <begin position="403"/>
        <end position="412"/>
    </location>
</feature>
<feature type="helix" evidence="21">
    <location>
        <begin position="481"/>
        <end position="487"/>
    </location>
</feature>
<feature type="strand" evidence="21">
    <location>
        <begin position="488"/>
        <end position="490"/>
    </location>
</feature>
<feature type="helix" evidence="21">
    <location>
        <begin position="492"/>
        <end position="500"/>
    </location>
</feature>
<feature type="helix" evidence="21">
    <location>
        <begin position="502"/>
        <end position="505"/>
    </location>
</feature>
<feature type="helix" evidence="21">
    <location>
        <begin position="507"/>
        <end position="515"/>
    </location>
</feature>
<feature type="turn" evidence="21">
    <location>
        <begin position="516"/>
        <end position="521"/>
    </location>
</feature>
<feature type="strand" evidence="21">
    <location>
        <begin position="522"/>
        <end position="525"/>
    </location>
</feature>
<feature type="helix" evidence="21">
    <location>
        <begin position="526"/>
        <end position="532"/>
    </location>
</feature>
<feature type="helix" evidence="21">
    <location>
        <begin position="537"/>
        <end position="546"/>
    </location>
</feature>
<feature type="turn" evidence="21">
    <location>
        <begin position="547"/>
        <end position="550"/>
    </location>
</feature>
<feature type="strand" evidence="21">
    <location>
        <begin position="551"/>
        <end position="557"/>
    </location>
</feature>
<feature type="turn" evidence="21">
    <location>
        <begin position="559"/>
        <end position="563"/>
    </location>
</feature>
<sequence>MRDNTSPISVILVSSGSRGNKLLFRYPFQRSQEHPASQTSKPRSRYAASNTGDHADEQDGDSRFSDVILATILATKSEMCGQKFELKIDNVRFVGHPTLLQHALGQISKTDPSPKREAPTMILFNVVFALRANADPSVINCLHNLSRRIATVLQHEERRCQYLTREAKLILALQDEVSAMADGNEGPQSPFHHILPKCKLARDLKEAYDSLCTSGVVRLHINSWLEVSFCLPHKIHYAASSLIPPEAIERSLKAIRPYHALLLLSDEKSLLGELPIDCSPALVRVIKTTSAVKNLQQLAQDADLALLQVFQLAAHLVYWGKAIIIYPLCENNVYMLSPNASVCLYSPLAEQFSHQFPSHDLPSVLAKFSLPVSLSEFRNPLAPAVQETQLIQMVVWMLQRRLLIQLHTYVCLMASPSEEEPRPREDDVPFTARVGGRSLSTPNALSFGSPTSSDDMTLTSPSMDNSSAELLPSGDSPLNQRMTENLLASLSEHERAAILSVPAAQNPEDLRMFARLLHYFRGRHHLEEIMYNENTRRSQLLMLFDKFRSVLVVTTHEDPVIAVFQALLP</sequence>